<dbReference type="EMBL" id="D89630">
    <property type="protein sequence ID" value="BAA24264.1"/>
    <property type="molecule type" value="mRNA"/>
</dbReference>
<dbReference type="EMBL" id="Y12863">
    <property type="protein sequence ID" value="CAA73370.1"/>
    <property type="molecule type" value="mRNA"/>
</dbReference>
<dbReference type="EMBL" id="Y12864">
    <property type="protein sequence ID" value="CAA73371.1"/>
    <property type="molecule type" value="Genomic_DNA"/>
</dbReference>
<dbReference type="EMBL" id="Y12865">
    <property type="protein sequence ID" value="CAA73371.1"/>
    <property type="status" value="JOINED"/>
    <property type="molecule type" value="Genomic_DNA"/>
</dbReference>
<dbReference type="EMBL" id="Y12866">
    <property type="protein sequence ID" value="CAA73371.1"/>
    <property type="status" value="JOINED"/>
    <property type="molecule type" value="Genomic_DNA"/>
</dbReference>
<dbReference type="EMBL" id="Y12867">
    <property type="protein sequence ID" value="CAA73371.1"/>
    <property type="status" value="JOINED"/>
    <property type="molecule type" value="Genomic_DNA"/>
</dbReference>
<dbReference type="EMBL" id="Y12868">
    <property type="protein sequence ID" value="CAA73371.1"/>
    <property type="status" value="JOINED"/>
    <property type="molecule type" value="Genomic_DNA"/>
</dbReference>
<dbReference type="EMBL" id="Y12869">
    <property type="protein sequence ID" value="CAA73371.1"/>
    <property type="status" value="JOINED"/>
    <property type="molecule type" value="Genomic_DNA"/>
</dbReference>
<dbReference type="EMBL" id="Y12870">
    <property type="protein sequence ID" value="CAA73371.1"/>
    <property type="status" value="JOINED"/>
    <property type="molecule type" value="Genomic_DNA"/>
</dbReference>
<dbReference type="EMBL" id="AJ000185">
    <property type="protein sequence ID" value="CAA03942.1"/>
    <property type="molecule type" value="mRNA"/>
</dbReference>
<dbReference type="EMBL" id="AK313173">
    <property type="protein sequence ID" value="BAG35990.1"/>
    <property type="molecule type" value="mRNA"/>
</dbReference>
<dbReference type="EMBL" id="CH471074">
    <property type="protein sequence ID" value="EAW98885.1"/>
    <property type="molecule type" value="Genomic_DNA"/>
</dbReference>
<dbReference type="EMBL" id="BC027948">
    <property type="protein sequence ID" value="AAH27948.1"/>
    <property type="molecule type" value="mRNA"/>
</dbReference>
<dbReference type="CCDS" id="CCDS14166.1"/>
<dbReference type="RefSeq" id="NP_004460.1">
    <property type="nucleotide sequence ID" value="NM_004469.5"/>
</dbReference>
<dbReference type="PDB" id="2XV7">
    <property type="method" value="X-ray"/>
    <property type="resolution" value="2.90 A"/>
    <property type="chains" value="A=92-195"/>
</dbReference>
<dbReference type="PDBsum" id="2XV7"/>
<dbReference type="SMR" id="O43915"/>
<dbReference type="BioGRID" id="108567">
    <property type="interactions" value="57"/>
</dbReference>
<dbReference type="CORUM" id="O43915"/>
<dbReference type="FunCoup" id="O43915">
    <property type="interactions" value="990"/>
</dbReference>
<dbReference type="IntAct" id="O43915">
    <property type="interactions" value="33"/>
</dbReference>
<dbReference type="STRING" id="9606.ENSP00000297904"/>
<dbReference type="DrugBank" id="DB12818">
    <property type="generic name" value="NM-3"/>
</dbReference>
<dbReference type="DrugBank" id="DB14911">
    <property type="generic name" value="Risuteganib"/>
</dbReference>
<dbReference type="DrugBank" id="DB06461">
    <property type="generic name" value="Squalamine"/>
</dbReference>
<dbReference type="DrugBank" id="DB05075">
    <property type="generic name" value="TG-100801"/>
</dbReference>
<dbReference type="TCDB" id="8.A.245.1.4">
    <property type="family name" value="the vascular endothelial growth factor (vegf) family"/>
</dbReference>
<dbReference type="GlyCosmos" id="O43915">
    <property type="glycosylation" value="3 sites, No reported glycans"/>
</dbReference>
<dbReference type="GlyGen" id="O43915">
    <property type="glycosylation" value="4 sites, 1 O-linked glycan (1 site)"/>
</dbReference>
<dbReference type="iPTMnet" id="O43915"/>
<dbReference type="PhosphoSitePlus" id="O43915"/>
<dbReference type="BioMuta" id="VEGFD"/>
<dbReference type="MassIVE" id="O43915"/>
<dbReference type="PaxDb" id="9606-ENSP00000297904"/>
<dbReference type="PeptideAtlas" id="O43915"/>
<dbReference type="ProteomicsDB" id="49231"/>
<dbReference type="Antibodypedia" id="8816">
    <property type="antibodies" value="672 antibodies from 39 providers"/>
</dbReference>
<dbReference type="DNASU" id="2277"/>
<dbReference type="Ensembl" id="ENST00000297904.4">
    <property type="protein sequence ID" value="ENSP00000297904.3"/>
    <property type="gene ID" value="ENSG00000165197.5"/>
</dbReference>
<dbReference type="GeneID" id="2277"/>
<dbReference type="KEGG" id="hsa:2277"/>
<dbReference type="MANE-Select" id="ENST00000297904.4">
    <property type="protein sequence ID" value="ENSP00000297904.3"/>
    <property type="RefSeq nucleotide sequence ID" value="NM_004469.5"/>
    <property type="RefSeq protein sequence ID" value="NP_004460.1"/>
</dbReference>
<dbReference type="UCSC" id="uc004cwt.3">
    <property type="organism name" value="human"/>
</dbReference>
<dbReference type="AGR" id="HGNC:3708"/>
<dbReference type="CTD" id="2277"/>
<dbReference type="DisGeNET" id="2277"/>
<dbReference type="GeneCards" id="VEGFD"/>
<dbReference type="HGNC" id="HGNC:3708">
    <property type="gene designation" value="VEGFD"/>
</dbReference>
<dbReference type="HPA" id="ENSG00000165197">
    <property type="expression patterns" value="Tissue enhanced (lung)"/>
</dbReference>
<dbReference type="MIM" id="300091">
    <property type="type" value="gene"/>
</dbReference>
<dbReference type="neXtProt" id="NX_O43915"/>
<dbReference type="OpenTargets" id="ENSG00000165197"/>
<dbReference type="PharmGKB" id="PA28146"/>
<dbReference type="VEuPathDB" id="HostDB:ENSG00000165197"/>
<dbReference type="eggNOG" id="ENOG502QVIH">
    <property type="taxonomic scope" value="Eukaryota"/>
</dbReference>
<dbReference type="GeneTree" id="ENSGT00940000159726"/>
<dbReference type="HOGENOM" id="CLU_061712_0_0_1"/>
<dbReference type="InParanoid" id="O43915"/>
<dbReference type="OMA" id="IDMLWDN"/>
<dbReference type="OrthoDB" id="198735at2759"/>
<dbReference type="PAN-GO" id="O43915">
    <property type="GO annotations" value="13 GO annotations based on evolutionary models"/>
</dbReference>
<dbReference type="PhylomeDB" id="O43915"/>
<dbReference type="TreeFam" id="TF319554"/>
<dbReference type="BRENDA" id="3.4.21.46">
    <property type="organism ID" value="2681"/>
</dbReference>
<dbReference type="PathwayCommons" id="O43915"/>
<dbReference type="Reactome" id="R-HSA-114608">
    <property type="pathway name" value="Platelet degranulation"/>
</dbReference>
<dbReference type="Reactome" id="R-HSA-194313">
    <property type="pathway name" value="VEGF ligand-receptor interactions"/>
</dbReference>
<dbReference type="Reactome" id="R-HSA-195399">
    <property type="pathway name" value="VEGF binds to VEGFR leading to receptor dimerization"/>
</dbReference>
<dbReference type="SignaLink" id="O43915"/>
<dbReference type="SIGNOR" id="O43915"/>
<dbReference type="BioGRID-ORCS" id="2277">
    <property type="hits" value="11 hits in 766 CRISPR screens"/>
</dbReference>
<dbReference type="ChiTaRS" id="VEGFD">
    <property type="organism name" value="human"/>
</dbReference>
<dbReference type="EvolutionaryTrace" id="O43915"/>
<dbReference type="GeneWiki" id="C-fos_induced_growth_factor"/>
<dbReference type="GenomeRNAi" id="2277"/>
<dbReference type="Pharos" id="O43915">
    <property type="development level" value="Tbio"/>
</dbReference>
<dbReference type="PRO" id="PR:O43915"/>
<dbReference type="Proteomes" id="UP000005640">
    <property type="component" value="Chromosome X"/>
</dbReference>
<dbReference type="RNAct" id="O43915">
    <property type="molecule type" value="protein"/>
</dbReference>
<dbReference type="Bgee" id="ENSG00000165197">
    <property type="expression patterns" value="Expressed in right lung and 117 other cell types or tissues"/>
</dbReference>
<dbReference type="GO" id="GO:0005576">
    <property type="term" value="C:extracellular region"/>
    <property type="evidence" value="ECO:0000304"/>
    <property type="project" value="Reactome"/>
</dbReference>
<dbReference type="GO" id="GO:0005615">
    <property type="term" value="C:extracellular space"/>
    <property type="evidence" value="ECO:0000318"/>
    <property type="project" value="GO_Central"/>
</dbReference>
<dbReference type="GO" id="GO:0016020">
    <property type="term" value="C:membrane"/>
    <property type="evidence" value="ECO:0007669"/>
    <property type="project" value="InterPro"/>
</dbReference>
<dbReference type="GO" id="GO:0031093">
    <property type="term" value="C:platelet alpha granule lumen"/>
    <property type="evidence" value="ECO:0000304"/>
    <property type="project" value="Reactome"/>
</dbReference>
<dbReference type="GO" id="GO:0042056">
    <property type="term" value="F:chemoattractant activity"/>
    <property type="evidence" value="ECO:0000314"/>
    <property type="project" value="UniProtKB"/>
</dbReference>
<dbReference type="GO" id="GO:0008083">
    <property type="term" value="F:growth factor activity"/>
    <property type="evidence" value="ECO:0000318"/>
    <property type="project" value="GO_Central"/>
</dbReference>
<dbReference type="GO" id="GO:0042802">
    <property type="term" value="F:identical protein binding"/>
    <property type="evidence" value="ECO:0007669"/>
    <property type="project" value="Ensembl"/>
</dbReference>
<dbReference type="GO" id="GO:0005161">
    <property type="term" value="F:platelet-derived growth factor receptor binding"/>
    <property type="evidence" value="ECO:0000304"/>
    <property type="project" value="ProtInc"/>
</dbReference>
<dbReference type="GO" id="GO:0043185">
    <property type="term" value="F:vascular endothelial growth factor receptor 3 binding"/>
    <property type="evidence" value="ECO:0007669"/>
    <property type="project" value="Ensembl"/>
</dbReference>
<dbReference type="GO" id="GO:0005172">
    <property type="term" value="F:vascular endothelial growth factor receptor binding"/>
    <property type="evidence" value="ECO:0000353"/>
    <property type="project" value="UniProtKB"/>
</dbReference>
<dbReference type="GO" id="GO:0071542">
    <property type="term" value="P:dopaminergic neuron differentiation"/>
    <property type="evidence" value="ECO:0007669"/>
    <property type="project" value="Ensembl"/>
</dbReference>
<dbReference type="GO" id="GO:0048144">
    <property type="term" value="P:fibroblast proliferation"/>
    <property type="evidence" value="ECO:0007669"/>
    <property type="project" value="Ensembl"/>
</dbReference>
<dbReference type="GO" id="GO:0050930">
    <property type="term" value="P:induction of positive chemotaxis"/>
    <property type="evidence" value="ECO:0000314"/>
    <property type="project" value="UniProtKB"/>
</dbReference>
<dbReference type="GO" id="GO:0051781">
    <property type="term" value="P:positive regulation of cell division"/>
    <property type="evidence" value="ECO:0007669"/>
    <property type="project" value="UniProtKB-KW"/>
</dbReference>
<dbReference type="GO" id="GO:0008284">
    <property type="term" value="P:positive regulation of cell population proliferation"/>
    <property type="evidence" value="ECO:0000304"/>
    <property type="project" value="ProtInc"/>
</dbReference>
<dbReference type="GO" id="GO:0060754">
    <property type="term" value="P:positive regulation of mast cell chemotaxis"/>
    <property type="evidence" value="ECO:0000314"/>
    <property type="project" value="UniProtKB"/>
</dbReference>
<dbReference type="GO" id="GO:0009617">
    <property type="term" value="P:response to bacterium"/>
    <property type="evidence" value="ECO:0007669"/>
    <property type="project" value="Ensembl"/>
</dbReference>
<dbReference type="GO" id="GO:0001666">
    <property type="term" value="P:response to hypoxia"/>
    <property type="evidence" value="ECO:0000318"/>
    <property type="project" value="GO_Central"/>
</dbReference>
<dbReference type="GO" id="GO:0002040">
    <property type="term" value="P:sprouting angiogenesis"/>
    <property type="evidence" value="ECO:0000318"/>
    <property type="project" value="GO_Central"/>
</dbReference>
<dbReference type="GO" id="GO:0048010">
    <property type="term" value="P:vascular endothelial growth factor receptor signaling pathway"/>
    <property type="evidence" value="ECO:0000318"/>
    <property type="project" value="GO_Central"/>
</dbReference>
<dbReference type="GO" id="GO:0038084">
    <property type="term" value="P:vascular endothelial growth factor signaling pathway"/>
    <property type="evidence" value="ECO:0000318"/>
    <property type="project" value="GO_Central"/>
</dbReference>
<dbReference type="CDD" id="cd00135">
    <property type="entry name" value="PDGF"/>
    <property type="match status" value="1"/>
</dbReference>
<dbReference type="FunFam" id="2.10.90.10:FF:000021">
    <property type="entry name" value="vascular endothelial growth factor D"/>
    <property type="match status" value="1"/>
</dbReference>
<dbReference type="Gene3D" id="2.10.90.10">
    <property type="entry name" value="Cystine-knot cytokines"/>
    <property type="match status" value="1"/>
</dbReference>
<dbReference type="InterPro" id="IPR004153">
    <property type="entry name" value="CXCXC_repeat"/>
</dbReference>
<dbReference type="InterPro" id="IPR029034">
    <property type="entry name" value="Cystine-knot_cytokine"/>
</dbReference>
<dbReference type="InterPro" id="IPR023581">
    <property type="entry name" value="PD_growth_factor_CS"/>
</dbReference>
<dbReference type="InterPro" id="IPR000072">
    <property type="entry name" value="PDGF/VEGF_dom"/>
</dbReference>
<dbReference type="InterPro" id="IPR050507">
    <property type="entry name" value="PDGF/VEGF_growth_factor"/>
</dbReference>
<dbReference type="PANTHER" id="PTHR12025">
    <property type="entry name" value="VASCULAR ENDOTHELIAL GROWTH FACTOR"/>
    <property type="match status" value="1"/>
</dbReference>
<dbReference type="PANTHER" id="PTHR12025:SF11">
    <property type="entry name" value="VASCULAR ENDOTHELIAL GROWTH FACTOR D"/>
    <property type="match status" value="1"/>
</dbReference>
<dbReference type="Pfam" id="PF03128">
    <property type="entry name" value="CXCXC"/>
    <property type="match status" value="1"/>
</dbReference>
<dbReference type="Pfam" id="PF00341">
    <property type="entry name" value="PDGF"/>
    <property type="match status" value="1"/>
</dbReference>
<dbReference type="SMART" id="SM00141">
    <property type="entry name" value="PDGF"/>
    <property type="match status" value="1"/>
</dbReference>
<dbReference type="SUPFAM" id="SSF57501">
    <property type="entry name" value="Cystine-knot cytokines"/>
    <property type="match status" value="1"/>
</dbReference>
<dbReference type="PROSITE" id="PS00249">
    <property type="entry name" value="PDGF_1"/>
    <property type="match status" value="1"/>
</dbReference>
<dbReference type="PROSITE" id="PS50278">
    <property type="entry name" value="PDGF_2"/>
    <property type="match status" value="1"/>
</dbReference>
<accession>O43915</accession>
<accession>B2R7Z3</accession>
<name>VEGFD_HUMAN</name>
<gene>
    <name evidence="5" type="primary">VEGFD</name>
    <name type="synonym">FIGF</name>
</gene>
<comment type="function">
    <text evidence="3">Growth factor active in angiogenesis, lymphangiogenesis and endothelial cell growth, stimulating their proliferation and migration and also has effects on the permeability of blood vessels. May function in the formation of the venous and lymphatic vascular systems during embryogenesis, and also in the maintenance of differentiated lymphatic endothelium in adults. Binds and activates VEGFR-2 (KDR/FLK1) and VEGFR-3 (FLT4) receptors.</text>
</comment>
<comment type="subunit">
    <text evidence="3">Homodimer; non-covalent and antiparallel.</text>
</comment>
<comment type="interaction">
    <interactant intactId="EBI-11750035">
        <id>O43915</id>
    </interactant>
    <interactant intactId="EBI-722343">
        <id>Q15836</id>
        <label>VAMP3</label>
    </interactant>
    <organismsDiffer>false</organismsDiffer>
    <experiments>4</experiments>
</comment>
<comment type="subcellular location">
    <subcellularLocation>
        <location>Secreted</location>
    </subcellularLocation>
</comment>
<comment type="tissue specificity">
    <text>Highly expressed in lung, heart, small intestine and fetal lung, and at lower levels in skeletal muscle, colon, and pancreas.</text>
</comment>
<comment type="PTM">
    <text evidence="2">Undergoes a complex proteolytic maturation which generates a variety of processed secreted forms with increased activity toward VEGFR-3 and VEGFR-2. VEGF-D first form an antiparallel homodimer linked by disulfide bonds before secretion. The fully processed VEGF-D is composed mostly of two VEGF homology domains (VHDs) bound by non-covalent interactions.</text>
</comment>
<comment type="similarity">
    <text evidence="4">Belongs to the PDGF/VEGF growth factor family.</text>
</comment>
<comment type="online information" name="Atlas of Genetics and Cytogenetics in Oncology and Haematology">
    <link uri="https://atlasgeneticsoncology.org/gene/40574/FIGF"/>
</comment>
<protein>
    <recommendedName>
        <fullName evidence="5">Vascular endothelial growth factor D</fullName>
        <shortName>VEGF-D</shortName>
    </recommendedName>
    <alternativeName>
        <fullName>c-Fos-induced growth factor</fullName>
        <shortName>FIGF</shortName>
    </alternativeName>
</protein>
<feature type="signal peptide" evidence="1">
    <location>
        <begin position="1"/>
        <end position="21"/>
    </location>
</feature>
<feature type="propeptide" id="PRO_0000023408" description="Or 99 (in a minor form)" evidence="2">
    <location>
        <begin position="22"/>
        <end position="88"/>
    </location>
</feature>
<feature type="chain" id="PRO_0000023409" description="Vascular endothelial growth factor D">
    <location>
        <begin position="89"/>
        <end position="205"/>
    </location>
</feature>
<feature type="propeptide" id="PRO_0000023410">
    <location>
        <begin position="206"/>
        <end position="354"/>
    </location>
</feature>
<feature type="repeat" description="1; approximate">
    <location>
        <begin position="222"/>
        <end position="237"/>
    </location>
</feature>
<feature type="repeat" description="2">
    <location>
        <begin position="258"/>
        <end position="273"/>
    </location>
</feature>
<feature type="repeat" description="3">
    <location>
        <begin position="277"/>
        <end position="293"/>
    </location>
</feature>
<feature type="repeat" description="4">
    <location>
        <begin position="301"/>
        <end position="318"/>
    </location>
</feature>
<feature type="region of interest" description="4 X 16 AA repeats of C-X(10)-C-X-C-X(1,3)-C">
    <location>
        <begin position="222"/>
        <end position="318"/>
    </location>
</feature>
<feature type="glycosylation site" description="N-linked (GlcNAc...) asparagine" evidence="3">
    <location>
        <position position="155"/>
    </location>
</feature>
<feature type="glycosylation site" description="N-linked (GlcNAc...) asparagine" evidence="3">
    <location>
        <position position="185"/>
    </location>
</feature>
<feature type="glycosylation site" description="N-linked (GlcNAc...) asparagine" evidence="1">
    <location>
        <position position="287"/>
    </location>
</feature>
<feature type="disulfide bond" evidence="3">
    <location>
        <begin position="111"/>
        <end position="153"/>
    </location>
</feature>
<feature type="disulfide bond" description="Interchain" evidence="3">
    <location>
        <position position="136"/>
    </location>
</feature>
<feature type="disulfide bond" evidence="3">
    <location>
        <begin position="142"/>
        <end position="189"/>
    </location>
</feature>
<feature type="disulfide bond" description="Interchain" evidence="3">
    <location>
        <position position="145"/>
    </location>
</feature>
<feature type="disulfide bond" evidence="3">
    <location>
        <begin position="146"/>
        <end position="191"/>
    </location>
</feature>
<feature type="helix" evidence="6">
    <location>
        <begin position="93"/>
        <end position="108"/>
    </location>
</feature>
<feature type="strand" evidence="6">
    <location>
        <begin position="110"/>
        <end position="119"/>
    </location>
</feature>
<feature type="helix" evidence="6">
    <location>
        <begin position="120"/>
        <end position="123"/>
    </location>
</feature>
<feature type="helix" evidence="6">
    <location>
        <begin position="127"/>
        <end position="129"/>
    </location>
</feature>
<feature type="strand" evidence="6">
    <location>
        <begin position="133"/>
        <end position="143"/>
    </location>
</feature>
<feature type="strand" evidence="6">
    <location>
        <begin position="152"/>
        <end position="166"/>
    </location>
</feature>
<feature type="strand" evidence="6">
    <location>
        <begin position="169"/>
        <end position="171"/>
    </location>
</feature>
<feature type="strand" evidence="6">
    <location>
        <begin position="178"/>
        <end position="192"/>
    </location>
</feature>
<keyword id="KW-0002">3D-structure</keyword>
<keyword id="KW-0037">Angiogenesis</keyword>
<keyword id="KW-0165">Cleavage on pair of basic residues</keyword>
<keyword id="KW-0217">Developmental protein</keyword>
<keyword id="KW-0221">Differentiation</keyword>
<keyword id="KW-0903">Direct protein sequencing</keyword>
<keyword id="KW-1015">Disulfide bond</keyword>
<keyword id="KW-0325">Glycoprotein</keyword>
<keyword id="KW-0339">Growth factor</keyword>
<keyword id="KW-0497">Mitogen</keyword>
<keyword id="KW-1267">Proteomics identification</keyword>
<keyword id="KW-1185">Reference proteome</keyword>
<keyword id="KW-0677">Repeat</keyword>
<keyword id="KW-0964">Secreted</keyword>
<keyword id="KW-0732">Signal</keyword>
<reference key="1">
    <citation type="journal article" date="1997" name="Genomics">
        <title>Molecular cloning of a novel vascular endothelial growth factor, VEGF-D.</title>
        <authorList>
            <person name="Yamada Y."/>
            <person name="Nezu J."/>
            <person name="Shimane M."/>
            <person name="Hirata Y."/>
        </authorList>
    </citation>
    <scope>NUCLEOTIDE SEQUENCE [MRNA]</scope>
    <source>
        <tissue>Lung</tissue>
    </source>
</reference>
<reference key="2">
    <citation type="journal article" date="1998" name="Genomics">
        <title>Human FIGF: cloning, gene structure, and mapping to chromosome Xp22.1 between the PIGA and the GRPR genes.</title>
        <authorList>
            <person name="Rocchigiani M."/>
            <person name="Lestingi M."/>
            <person name="Luddi A."/>
            <person name="Orlandini M."/>
            <person name="Franco B."/>
            <person name="Rossi E."/>
            <person name="Ballabio A."/>
            <person name="Zuffardi O."/>
            <person name="Oliviero S."/>
        </authorList>
    </citation>
    <scope>NUCLEOTIDE SEQUENCE [GENOMIC DNA / MRNA]</scope>
    <source>
        <tissue>Lung</tissue>
    </source>
</reference>
<reference key="3">
    <citation type="journal article" date="1998" name="Proc. Natl. Acad. Sci. U.S.A.">
        <title>Vascular endothelial growth factor D (VEGF-D) is a ligand for the tyrosine kinases VEGF receptor 2 (Flk1) and VEGF receptor 3 (Flt4).</title>
        <authorList>
            <person name="Achen M.G."/>
            <person name="Jeltsch M."/>
            <person name="Kukk E."/>
            <person name="Maekinen T."/>
            <person name="Vitali A."/>
            <person name="Wilks A.F."/>
            <person name="Alitalo K."/>
            <person name="Stacker S.A."/>
        </authorList>
    </citation>
    <scope>NUCLEOTIDE SEQUENCE [MRNA]</scope>
</reference>
<reference key="4">
    <citation type="journal article" date="2004" name="Nat. Genet.">
        <title>Complete sequencing and characterization of 21,243 full-length human cDNAs.</title>
        <authorList>
            <person name="Ota T."/>
            <person name="Suzuki Y."/>
            <person name="Nishikawa T."/>
            <person name="Otsuki T."/>
            <person name="Sugiyama T."/>
            <person name="Irie R."/>
            <person name="Wakamatsu A."/>
            <person name="Hayashi K."/>
            <person name="Sato H."/>
            <person name="Nagai K."/>
            <person name="Kimura K."/>
            <person name="Makita H."/>
            <person name="Sekine M."/>
            <person name="Obayashi M."/>
            <person name="Nishi T."/>
            <person name="Shibahara T."/>
            <person name="Tanaka T."/>
            <person name="Ishii S."/>
            <person name="Yamamoto J."/>
            <person name="Saito K."/>
            <person name="Kawai Y."/>
            <person name="Isono Y."/>
            <person name="Nakamura Y."/>
            <person name="Nagahari K."/>
            <person name="Murakami K."/>
            <person name="Yasuda T."/>
            <person name="Iwayanagi T."/>
            <person name="Wagatsuma M."/>
            <person name="Shiratori A."/>
            <person name="Sudo H."/>
            <person name="Hosoiri T."/>
            <person name="Kaku Y."/>
            <person name="Kodaira H."/>
            <person name="Kondo H."/>
            <person name="Sugawara M."/>
            <person name="Takahashi M."/>
            <person name="Kanda K."/>
            <person name="Yokoi T."/>
            <person name="Furuya T."/>
            <person name="Kikkawa E."/>
            <person name="Omura Y."/>
            <person name="Abe K."/>
            <person name="Kamihara K."/>
            <person name="Katsuta N."/>
            <person name="Sato K."/>
            <person name="Tanikawa M."/>
            <person name="Yamazaki M."/>
            <person name="Ninomiya K."/>
            <person name="Ishibashi T."/>
            <person name="Yamashita H."/>
            <person name="Murakawa K."/>
            <person name="Fujimori K."/>
            <person name="Tanai H."/>
            <person name="Kimata M."/>
            <person name="Watanabe M."/>
            <person name="Hiraoka S."/>
            <person name="Chiba Y."/>
            <person name="Ishida S."/>
            <person name="Ono Y."/>
            <person name="Takiguchi S."/>
            <person name="Watanabe S."/>
            <person name="Yosida M."/>
            <person name="Hotuta T."/>
            <person name="Kusano J."/>
            <person name="Kanehori K."/>
            <person name="Takahashi-Fujii A."/>
            <person name="Hara H."/>
            <person name="Tanase T.-O."/>
            <person name="Nomura Y."/>
            <person name="Togiya S."/>
            <person name="Komai F."/>
            <person name="Hara R."/>
            <person name="Takeuchi K."/>
            <person name="Arita M."/>
            <person name="Imose N."/>
            <person name="Musashino K."/>
            <person name="Yuuki H."/>
            <person name="Oshima A."/>
            <person name="Sasaki N."/>
            <person name="Aotsuka S."/>
            <person name="Yoshikawa Y."/>
            <person name="Matsunawa H."/>
            <person name="Ichihara T."/>
            <person name="Shiohata N."/>
            <person name="Sano S."/>
            <person name="Moriya S."/>
            <person name="Momiyama H."/>
            <person name="Satoh N."/>
            <person name="Takami S."/>
            <person name="Terashima Y."/>
            <person name="Suzuki O."/>
            <person name="Nakagawa S."/>
            <person name="Senoh A."/>
            <person name="Mizoguchi H."/>
            <person name="Goto Y."/>
            <person name="Shimizu F."/>
            <person name="Wakebe H."/>
            <person name="Hishigaki H."/>
            <person name="Watanabe T."/>
            <person name="Sugiyama A."/>
            <person name="Takemoto M."/>
            <person name="Kawakami B."/>
            <person name="Yamazaki M."/>
            <person name="Watanabe K."/>
            <person name="Kumagai A."/>
            <person name="Itakura S."/>
            <person name="Fukuzumi Y."/>
            <person name="Fujimori Y."/>
            <person name="Komiyama M."/>
            <person name="Tashiro H."/>
            <person name="Tanigami A."/>
            <person name="Fujiwara T."/>
            <person name="Ono T."/>
            <person name="Yamada K."/>
            <person name="Fujii Y."/>
            <person name="Ozaki K."/>
            <person name="Hirao M."/>
            <person name="Ohmori Y."/>
            <person name="Kawabata A."/>
            <person name="Hikiji T."/>
            <person name="Kobatake N."/>
            <person name="Inagaki H."/>
            <person name="Ikema Y."/>
            <person name="Okamoto S."/>
            <person name="Okitani R."/>
            <person name="Kawakami T."/>
            <person name="Noguchi S."/>
            <person name="Itoh T."/>
            <person name="Shigeta K."/>
            <person name="Senba T."/>
            <person name="Matsumura K."/>
            <person name="Nakajima Y."/>
            <person name="Mizuno T."/>
            <person name="Morinaga M."/>
            <person name="Sasaki M."/>
            <person name="Togashi T."/>
            <person name="Oyama M."/>
            <person name="Hata H."/>
            <person name="Watanabe M."/>
            <person name="Komatsu T."/>
            <person name="Mizushima-Sugano J."/>
            <person name="Satoh T."/>
            <person name="Shirai Y."/>
            <person name="Takahashi Y."/>
            <person name="Nakagawa K."/>
            <person name="Okumura K."/>
            <person name="Nagase T."/>
            <person name="Nomura N."/>
            <person name="Kikuchi H."/>
            <person name="Masuho Y."/>
            <person name="Yamashita R."/>
            <person name="Nakai K."/>
            <person name="Yada T."/>
            <person name="Nakamura Y."/>
            <person name="Ohara O."/>
            <person name="Isogai T."/>
            <person name="Sugano S."/>
        </authorList>
    </citation>
    <scope>NUCLEOTIDE SEQUENCE [LARGE SCALE MRNA]</scope>
    <source>
        <tissue>Lung</tissue>
    </source>
</reference>
<reference key="5">
    <citation type="submission" date="2005-07" db="EMBL/GenBank/DDBJ databases">
        <authorList>
            <person name="Mural R.J."/>
            <person name="Istrail S."/>
            <person name="Sutton G.G."/>
            <person name="Florea L."/>
            <person name="Halpern A.L."/>
            <person name="Mobarry C.M."/>
            <person name="Lippert R."/>
            <person name="Walenz B."/>
            <person name="Shatkay H."/>
            <person name="Dew I."/>
            <person name="Miller J.R."/>
            <person name="Flanigan M.J."/>
            <person name="Edwards N.J."/>
            <person name="Bolanos R."/>
            <person name="Fasulo D."/>
            <person name="Halldorsson B.V."/>
            <person name="Hannenhalli S."/>
            <person name="Turner R."/>
            <person name="Yooseph S."/>
            <person name="Lu F."/>
            <person name="Nusskern D.R."/>
            <person name="Shue B.C."/>
            <person name="Zheng X.H."/>
            <person name="Zhong F."/>
            <person name="Delcher A.L."/>
            <person name="Huson D.H."/>
            <person name="Kravitz S.A."/>
            <person name="Mouchard L."/>
            <person name="Reinert K."/>
            <person name="Remington K.A."/>
            <person name="Clark A.G."/>
            <person name="Waterman M.S."/>
            <person name="Eichler E.E."/>
            <person name="Adams M.D."/>
            <person name="Hunkapiller M.W."/>
            <person name="Myers E.W."/>
            <person name="Venter J.C."/>
        </authorList>
    </citation>
    <scope>NUCLEOTIDE SEQUENCE [LARGE SCALE GENOMIC DNA]</scope>
</reference>
<reference key="6">
    <citation type="journal article" date="2004" name="Genome Res.">
        <title>The status, quality, and expansion of the NIH full-length cDNA project: the Mammalian Gene Collection (MGC).</title>
        <authorList>
            <consortium name="The MGC Project Team"/>
        </authorList>
    </citation>
    <scope>NUCLEOTIDE SEQUENCE [LARGE SCALE MRNA]</scope>
    <source>
        <tissue>Lung</tissue>
    </source>
</reference>
<reference key="7">
    <citation type="journal article" date="1999" name="J. Biol. Chem.">
        <title>Biosynthesis of vascular endothelial growth factor-D involves proteolytic processing which generates non-covalent homodimers.</title>
        <authorList>
            <person name="Stacker S.A."/>
            <person name="Stenvers K.L."/>
            <person name="Caesar C."/>
            <person name="Vitali A."/>
            <person name="Domagala T."/>
            <person name="Nice E.C."/>
            <person name="Roufail S."/>
            <person name="Simpson R.J."/>
            <person name="Moritz R."/>
            <person name="Karpanen T."/>
            <person name="Alitalo K."/>
            <person name="Achen M.G."/>
        </authorList>
    </citation>
    <scope>PROTEIN SEQUENCE OF 89-94; 100-105 AND 206-213</scope>
    <scope>PROTEOLYTIC PROCESSING</scope>
</reference>
<reference key="8">
    <citation type="journal article" date="2011" name="Blood">
        <title>Structural determinants of vascular endothelial growth factor-D - receptor binding and specificity.</title>
        <authorList>
            <person name="Leppanen V.M."/>
            <person name="Jeltsch M."/>
            <person name="Anisimov A."/>
            <person name="Tvorogov D."/>
            <person name="Aho K."/>
            <person name="Kalkkinen N."/>
            <person name="Toivanen P."/>
            <person name="Yla-Herttuala S."/>
            <person name="Ballmer-Hofer K."/>
            <person name="Alitalo K."/>
        </authorList>
    </citation>
    <scope>X-RAY CRYSTALLOGRAPHY (2.9 ANGSTROMS) OF 92-195 OF MUTANT ALA-117</scope>
    <scope>FUNCTION</scope>
    <scope>SUBUNIT</scope>
    <scope>GLYCOSYLATION AT ASN-155 AND ASN-185</scope>
    <scope>DISULFIDE BONDS</scope>
</reference>
<sequence length="354" mass="40444">MYREWVVVNVFMMLYVQLVQGSSNEHGPVKRSSQSTLERSEQQIRAASSLEELLRITHSEDWKLWRCRLRLKSFTSMDSRSASHRSTRFAATFYDIETLKVIDEEWQRTQCSPRETCVEVASELGKSTNTFFKPPCVNVFRCGGCCNEESLICMNTSTSYISKQLFEISVPLTSVPELVPVKVANHTGCKCLPTAPRHPYSIIRRSIQIPEEDRCSHSKKLCPIDMLWDSNKCKCVLQEENPLAGTEDHSHLQEPALCGPHMMFDEDRCECVCKTPCPKDLIQHPKNCSCFECKESLETCCQKHKLFHPDTCSCEDRCPFHTRPCASGKTACAKHCRFPKEKRAAQGPHSRKNP</sequence>
<organism>
    <name type="scientific">Homo sapiens</name>
    <name type="common">Human</name>
    <dbReference type="NCBI Taxonomy" id="9606"/>
    <lineage>
        <taxon>Eukaryota</taxon>
        <taxon>Metazoa</taxon>
        <taxon>Chordata</taxon>
        <taxon>Craniata</taxon>
        <taxon>Vertebrata</taxon>
        <taxon>Euteleostomi</taxon>
        <taxon>Mammalia</taxon>
        <taxon>Eutheria</taxon>
        <taxon>Euarchontoglires</taxon>
        <taxon>Primates</taxon>
        <taxon>Haplorrhini</taxon>
        <taxon>Catarrhini</taxon>
        <taxon>Hominidae</taxon>
        <taxon>Homo</taxon>
    </lineage>
</organism>
<proteinExistence type="evidence at protein level"/>
<evidence type="ECO:0000255" key="1"/>
<evidence type="ECO:0000269" key="2">
    <source>
    </source>
</evidence>
<evidence type="ECO:0000269" key="3">
    <source>
    </source>
</evidence>
<evidence type="ECO:0000305" key="4"/>
<evidence type="ECO:0000312" key="5">
    <source>
        <dbReference type="HGNC" id="HGNC:3708"/>
    </source>
</evidence>
<evidence type="ECO:0007829" key="6">
    <source>
        <dbReference type="PDB" id="2XV7"/>
    </source>
</evidence>